<feature type="chain" id="PRO_0000238383" description="ATP synthase subunit alpha 1">
    <location>
        <begin position="1"/>
        <end position="504"/>
    </location>
</feature>
<feature type="binding site" evidence="1">
    <location>
        <begin position="170"/>
        <end position="177"/>
    </location>
    <ligand>
        <name>ATP</name>
        <dbReference type="ChEBI" id="CHEBI:30616"/>
    </ligand>
</feature>
<feature type="site" description="Required for activity" evidence="1">
    <location>
        <position position="363"/>
    </location>
</feature>
<comment type="function">
    <text evidence="1">Produces ATP from ADP in the presence of a proton gradient across the membrane. The alpha chain is a regulatory subunit.</text>
</comment>
<comment type="catalytic activity">
    <reaction evidence="1">
        <text>ATP + H2O + 4 H(+)(in) = ADP + phosphate + 5 H(+)(out)</text>
        <dbReference type="Rhea" id="RHEA:57720"/>
        <dbReference type="ChEBI" id="CHEBI:15377"/>
        <dbReference type="ChEBI" id="CHEBI:15378"/>
        <dbReference type="ChEBI" id="CHEBI:30616"/>
        <dbReference type="ChEBI" id="CHEBI:43474"/>
        <dbReference type="ChEBI" id="CHEBI:456216"/>
        <dbReference type="EC" id="7.1.2.2"/>
    </reaction>
</comment>
<comment type="subunit">
    <text evidence="1">F-type ATPases have 2 components, CF(1) - the catalytic core - and CF(0) - the membrane proton channel. CF(1) has five subunits: alpha(3), beta(3), gamma(1), delta(1), epsilon(1). CF(0) has three main subunits: a(1), b(2) and c(9-12). The alpha and beta chains form an alternating ring which encloses part of the gamma chain. CF(1) is attached to CF(0) by a central stalk formed by the gamma and epsilon chains, while a peripheral stalk is formed by the delta and b chains.</text>
</comment>
<comment type="subcellular location">
    <subcellularLocation>
        <location evidence="1">Cell inner membrane</location>
        <topology evidence="1">Peripheral membrane protein</topology>
    </subcellularLocation>
</comment>
<comment type="similarity">
    <text evidence="1">Belongs to the ATPase alpha/beta chains family.</text>
</comment>
<accession>Q2LQZ7</accession>
<dbReference type="EC" id="7.1.2.2" evidence="1"/>
<dbReference type="EMBL" id="CP000252">
    <property type="protein sequence ID" value="ABC76509.1"/>
    <property type="molecule type" value="Genomic_DNA"/>
</dbReference>
<dbReference type="RefSeq" id="WP_011416543.1">
    <property type="nucleotide sequence ID" value="NC_007759.1"/>
</dbReference>
<dbReference type="SMR" id="Q2LQZ7"/>
<dbReference type="FunCoup" id="Q2LQZ7">
    <property type="interactions" value="350"/>
</dbReference>
<dbReference type="STRING" id="56780.SYN_00546"/>
<dbReference type="KEGG" id="sat:SYN_00546"/>
<dbReference type="eggNOG" id="COG0056">
    <property type="taxonomic scope" value="Bacteria"/>
</dbReference>
<dbReference type="HOGENOM" id="CLU_010091_2_1_7"/>
<dbReference type="InParanoid" id="Q2LQZ7"/>
<dbReference type="OrthoDB" id="9803053at2"/>
<dbReference type="Proteomes" id="UP000001933">
    <property type="component" value="Chromosome"/>
</dbReference>
<dbReference type="GO" id="GO:0005886">
    <property type="term" value="C:plasma membrane"/>
    <property type="evidence" value="ECO:0007669"/>
    <property type="project" value="UniProtKB-SubCell"/>
</dbReference>
<dbReference type="GO" id="GO:0045259">
    <property type="term" value="C:proton-transporting ATP synthase complex"/>
    <property type="evidence" value="ECO:0007669"/>
    <property type="project" value="UniProtKB-KW"/>
</dbReference>
<dbReference type="GO" id="GO:0043531">
    <property type="term" value="F:ADP binding"/>
    <property type="evidence" value="ECO:0007669"/>
    <property type="project" value="TreeGrafter"/>
</dbReference>
<dbReference type="GO" id="GO:0005524">
    <property type="term" value="F:ATP binding"/>
    <property type="evidence" value="ECO:0007669"/>
    <property type="project" value="UniProtKB-UniRule"/>
</dbReference>
<dbReference type="GO" id="GO:0046933">
    <property type="term" value="F:proton-transporting ATP synthase activity, rotational mechanism"/>
    <property type="evidence" value="ECO:0007669"/>
    <property type="project" value="UniProtKB-UniRule"/>
</dbReference>
<dbReference type="CDD" id="cd18113">
    <property type="entry name" value="ATP-synt_F1_alpha_C"/>
    <property type="match status" value="1"/>
</dbReference>
<dbReference type="CDD" id="cd18116">
    <property type="entry name" value="ATP-synt_F1_alpha_N"/>
    <property type="match status" value="1"/>
</dbReference>
<dbReference type="CDD" id="cd01132">
    <property type="entry name" value="F1-ATPase_alpha_CD"/>
    <property type="match status" value="1"/>
</dbReference>
<dbReference type="FunFam" id="1.20.150.20:FF:000001">
    <property type="entry name" value="ATP synthase subunit alpha"/>
    <property type="match status" value="1"/>
</dbReference>
<dbReference type="FunFam" id="2.40.30.20:FF:000001">
    <property type="entry name" value="ATP synthase subunit alpha"/>
    <property type="match status" value="1"/>
</dbReference>
<dbReference type="FunFam" id="3.40.50.300:FF:000002">
    <property type="entry name" value="ATP synthase subunit alpha"/>
    <property type="match status" value="1"/>
</dbReference>
<dbReference type="Gene3D" id="2.40.30.20">
    <property type="match status" value="1"/>
</dbReference>
<dbReference type="Gene3D" id="1.20.150.20">
    <property type="entry name" value="ATP synthase alpha/beta chain, C-terminal domain"/>
    <property type="match status" value="1"/>
</dbReference>
<dbReference type="Gene3D" id="3.40.50.300">
    <property type="entry name" value="P-loop containing nucleotide triphosphate hydrolases"/>
    <property type="match status" value="1"/>
</dbReference>
<dbReference type="HAMAP" id="MF_01346">
    <property type="entry name" value="ATP_synth_alpha_bact"/>
    <property type="match status" value="1"/>
</dbReference>
<dbReference type="InterPro" id="IPR023366">
    <property type="entry name" value="ATP_synth_asu-like_sf"/>
</dbReference>
<dbReference type="InterPro" id="IPR000793">
    <property type="entry name" value="ATP_synth_asu_C"/>
</dbReference>
<dbReference type="InterPro" id="IPR038376">
    <property type="entry name" value="ATP_synth_asu_C_sf"/>
</dbReference>
<dbReference type="InterPro" id="IPR033732">
    <property type="entry name" value="ATP_synth_F1_a_nt-bd_dom"/>
</dbReference>
<dbReference type="InterPro" id="IPR005294">
    <property type="entry name" value="ATP_synth_F1_asu"/>
</dbReference>
<dbReference type="InterPro" id="IPR020003">
    <property type="entry name" value="ATPase_a/bsu_AS"/>
</dbReference>
<dbReference type="InterPro" id="IPR004100">
    <property type="entry name" value="ATPase_F1/V1/A1_a/bsu_N"/>
</dbReference>
<dbReference type="InterPro" id="IPR036121">
    <property type="entry name" value="ATPase_F1/V1/A1_a/bsu_N_sf"/>
</dbReference>
<dbReference type="InterPro" id="IPR000194">
    <property type="entry name" value="ATPase_F1/V1/A1_a/bsu_nucl-bd"/>
</dbReference>
<dbReference type="InterPro" id="IPR027417">
    <property type="entry name" value="P-loop_NTPase"/>
</dbReference>
<dbReference type="NCBIfam" id="TIGR00962">
    <property type="entry name" value="atpA"/>
    <property type="match status" value="1"/>
</dbReference>
<dbReference type="NCBIfam" id="NF009884">
    <property type="entry name" value="PRK13343.1"/>
    <property type="match status" value="1"/>
</dbReference>
<dbReference type="PANTHER" id="PTHR48082">
    <property type="entry name" value="ATP SYNTHASE SUBUNIT ALPHA, MITOCHONDRIAL"/>
    <property type="match status" value="1"/>
</dbReference>
<dbReference type="PANTHER" id="PTHR48082:SF2">
    <property type="entry name" value="ATP SYNTHASE SUBUNIT ALPHA, MITOCHONDRIAL"/>
    <property type="match status" value="1"/>
</dbReference>
<dbReference type="Pfam" id="PF00006">
    <property type="entry name" value="ATP-synt_ab"/>
    <property type="match status" value="1"/>
</dbReference>
<dbReference type="Pfam" id="PF00306">
    <property type="entry name" value="ATP-synt_ab_C"/>
    <property type="match status" value="1"/>
</dbReference>
<dbReference type="Pfam" id="PF02874">
    <property type="entry name" value="ATP-synt_ab_N"/>
    <property type="match status" value="1"/>
</dbReference>
<dbReference type="PIRSF" id="PIRSF039088">
    <property type="entry name" value="F_ATPase_subunit_alpha"/>
    <property type="match status" value="1"/>
</dbReference>
<dbReference type="SUPFAM" id="SSF47917">
    <property type="entry name" value="C-terminal domain of alpha and beta subunits of F1 ATP synthase"/>
    <property type="match status" value="1"/>
</dbReference>
<dbReference type="SUPFAM" id="SSF50615">
    <property type="entry name" value="N-terminal domain of alpha and beta subunits of F1 ATP synthase"/>
    <property type="match status" value="1"/>
</dbReference>
<dbReference type="SUPFAM" id="SSF52540">
    <property type="entry name" value="P-loop containing nucleoside triphosphate hydrolases"/>
    <property type="match status" value="1"/>
</dbReference>
<dbReference type="PROSITE" id="PS00152">
    <property type="entry name" value="ATPASE_ALPHA_BETA"/>
    <property type="match status" value="1"/>
</dbReference>
<gene>
    <name evidence="1" type="primary">atpA1</name>
    <name type="ordered locus">SYNAS_06300</name>
    <name type="ORF">SYN_00546</name>
</gene>
<keyword id="KW-0066">ATP synthesis</keyword>
<keyword id="KW-0067">ATP-binding</keyword>
<keyword id="KW-0997">Cell inner membrane</keyword>
<keyword id="KW-1003">Cell membrane</keyword>
<keyword id="KW-0139">CF(1)</keyword>
<keyword id="KW-0375">Hydrogen ion transport</keyword>
<keyword id="KW-0406">Ion transport</keyword>
<keyword id="KW-0472">Membrane</keyword>
<keyword id="KW-0547">Nucleotide-binding</keyword>
<keyword id="KW-1185">Reference proteome</keyword>
<keyword id="KW-1278">Translocase</keyword>
<keyword id="KW-0813">Transport</keyword>
<reference key="1">
    <citation type="journal article" date="2007" name="Proc. Natl. Acad. Sci. U.S.A.">
        <title>The genome of Syntrophus aciditrophicus: life at the thermodynamic limit of microbial growth.</title>
        <authorList>
            <person name="McInerney M.J."/>
            <person name="Rohlin L."/>
            <person name="Mouttaki H."/>
            <person name="Kim U."/>
            <person name="Krupp R.S."/>
            <person name="Rios-Hernandez L."/>
            <person name="Sieber J."/>
            <person name="Struchtemeyer C.G."/>
            <person name="Bhattacharyya A."/>
            <person name="Campbell J.W."/>
            <person name="Gunsalus R.P."/>
        </authorList>
    </citation>
    <scope>NUCLEOTIDE SEQUENCE [LARGE SCALE GENOMIC DNA]</scope>
    <source>
        <strain>SB</strain>
    </source>
</reference>
<name>ATPA1_SYNAS</name>
<sequence length="504" mass="54762">MDTIKAEEISQIISKQIRDYEKKLDVSETGTVLSVGDGIARIYGVENAMAMELLEFPGGIMGMVLNLEADNVGVAVLGDVTHIKEGDIVKRTGKIAQIPVGEALLGRVIDATGEPIDGKGPLGATEFSRIEMIAPGVIKRQPVNEPMYTGLKAIDAMTPIGRGQRELIIGDRQIGKTAIGIDAIIRQKDTGVKCIYVAIGQKKSTVSQIVENLRKHDAMSYTCVVAGCASDPATLQYIAAYAGCSIGEYFRDRGQDALIIYDDLSKQAVAYRQISLLLRRPPGREAYPGDIFYNHSRLLERSARVSADLGGGSLTALPIIETQAGDVSAYIPTNVISITDGQVYLEPSLFFSGIRPAINVGLSVSRVGGAAQVKAMKQVAGTLKLDLAQYRELASFAQFGSDLDKATQAQLDRGVRLVEILKQPQFQPMSLAEEVIVLFAGTRGFLDKYEVEKIKEYEPQVLAYMKSKHQDIMQEIDDKKVISPELEQKIKEALTAFDSVFVAG</sequence>
<evidence type="ECO:0000255" key="1">
    <source>
        <dbReference type="HAMAP-Rule" id="MF_01346"/>
    </source>
</evidence>
<organism>
    <name type="scientific">Syntrophus aciditrophicus (strain SB)</name>
    <dbReference type="NCBI Taxonomy" id="56780"/>
    <lineage>
        <taxon>Bacteria</taxon>
        <taxon>Pseudomonadati</taxon>
        <taxon>Thermodesulfobacteriota</taxon>
        <taxon>Syntrophia</taxon>
        <taxon>Syntrophales</taxon>
        <taxon>Syntrophaceae</taxon>
        <taxon>Syntrophus</taxon>
    </lineage>
</organism>
<protein>
    <recommendedName>
        <fullName evidence="1">ATP synthase subunit alpha 1</fullName>
        <ecNumber evidence="1">7.1.2.2</ecNumber>
    </recommendedName>
    <alternativeName>
        <fullName evidence="1">ATP synthase F1 sector subunit alpha 1</fullName>
    </alternativeName>
    <alternativeName>
        <fullName evidence="1">F-ATPase subunit alpha 1</fullName>
    </alternativeName>
</protein>
<proteinExistence type="inferred from homology"/>